<sequence length="614" mass="66271">MYELLESINSPEDLRRLDRKELHELARQLRAFLINSVAQTGGHLSSNLGVVELTIALHYVFNTPEDRVVWDVGHQTYPHKILTGRRKDMGNLRRPGGIAGFPRRDESIYDTFGTGHSSTSISAALGMAVAAQKTGSDRHSIAVIGDGAMTAGMAFEALNNAGAMDANILVILNDNDMSISPNVGALTNYLAKLLSGPLYTTVRRSGEKVLGVVPPVREFAKRAEEHVKGMVTPGTLFEEFGFNYIGPIDGHDIDVLITTLRNIRELKGPQFLHIATQKGHGYQPAEDNPGKFHGVGKFDPSNGCSIAQAGKKTYTQVFSDWLVDMAARDERLVGITPAMCDGSGLNAFAEQFPDRFFDVGIAEQHALTFAAGMACDGLKPVVAIYSTFLQRAYDQFIHDIALQNLPVMFAIDRAGLVGADGPTHAGSFDLSYLRCIPNIIIMAPSDENECRQMLYTAYLHDGPSAVRYPRGGGPGATITRDMQLLPIGKGELRRQGSWVAILAFGSMLAPALEAAETLDATVANMRFVKPLDANLINQLASSHTLIVTVEENAVMGGAGAAVMECMQAADIHTPVLCLGLPDMFIEHGVHETMLAECGLNAAGIIAAIEKKLTK</sequence>
<evidence type="ECO:0000255" key="1">
    <source>
        <dbReference type="HAMAP-Rule" id="MF_00315"/>
    </source>
</evidence>
<name>DXS_METFK</name>
<keyword id="KW-0414">Isoprene biosynthesis</keyword>
<keyword id="KW-0460">Magnesium</keyword>
<keyword id="KW-0479">Metal-binding</keyword>
<keyword id="KW-1185">Reference proteome</keyword>
<keyword id="KW-0784">Thiamine biosynthesis</keyword>
<keyword id="KW-0786">Thiamine pyrophosphate</keyword>
<keyword id="KW-0808">Transferase</keyword>
<organism>
    <name type="scientific">Methylobacillus flagellatus (strain ATCC 51484 / DSM 6875 / VKM B-1610 / KT)</name>
    <dbReference type="NCBI Taxonomy" id="265072"/>
    <lineage>
        <taxon>Bacteria</taxon>
        <taxon>Pseudomonadati</taxon>
        <taxon>Pseudomonadota</taxon>
        <taxon>Betaproteobacteria</taxon>
        <taxon>Nitrosomonadales</taxon>
        <taxon>Methylophilaceae</taxon>
        <taxon>Methylobacillus</taxon>
    </lineage>
</organism>
<accession>Q1GZD7</accession>
<comment type="function">
    <text evidence="1">Catalyzes the acyloin condensation reaction between C atoms 2 and 3 of pyruvate and glyceraldehyde 3-phosphate to yield 1-deoxy-D-xylulose-5-phosphate (DXP).</text>
</comment>
<comment type="catalytic activity">
    <reaction evidence="1">
        <text>D-glyceraldehyde 3-phosphate + pyruvate + H(+) = 1-deoxy-D-xylulose 5-phosphate + CO2</text>
        <dbReference type="Rhea" id="RHEA:12605"/>
        <dbReference type="ChEBI" id="CHEBI:15361"/>
        <dbReference type="ChEBI" id="CHEBI:15378"/>
        <dbReference type="ChEBI" id="CHEBI:16526"/>
        <dbReference type="ChEBI" id="CHEBI:57792"/>
        <dbReference type="ChEBI" id="CHEBI:59776"/>
        <dbReference type="EC" id="2.2.1.7"/>
    </reaction>
</comment>
<comment type="cofactor">
    <cofactor evidence="1">
        <name>Mg(2+)</name>
        <dbReference type="ChEBI" id="CHEBI:18420"/>
    </cofactor>
    <text evidence="1">Binds 1 Mg(2+) ion per subunit.</text>
</comment>
<comment type="cofactor">
    <cofactor evidence="1">
        <name>thiamine diphosphate</name>
        <dbReference type="ChEBI" id="CHEBI:58937"/>
    </cofactor>
    <text evidence="1">Binds 1 thiamine pyrophosphate per subunit.</text>
</comment>
<comment type="pathway">
    <text evidence="1">Metabolic intermediate biosynthesis; 1-deoxy-D-xylulose 5-phosphate biosynthesis; 1-deoxy-D-xylulose 5-phosphate from D-glyceraldehyde 3-phosphate and pyruvate: step 1/1.</text>
</comment>
<comment type="subunit">
    <text evidence="1">Homodimer.</text>
</comment>
<comment type="similarity">
    <text evidence="1">Belongs to the transketolase family. DXPS subfamily.</text>
</comment>
<feature type="chain" id="PRO_0000256438" description="1-deoxy-D-xylulose-5-phosphate synthase">
    <location>
        <begin position="1"/>
        <end position="614"/>
    </location>
</feature>
<feature type="binding site" evidence="1">
    <location>
        <position position="74"/>
    </location>
    <ligand>
        <name>thiamine diphosphate</name>
        <dbReference type="ChEBI" id="CHEBI:58937"/>
    </ligand>
</feature>
<feature type="binding site" evidence="1">
    <location>
        <begin position="115"/>
        <end position="117"/>
    </location>
    <ligand>
        <name>thiamine diphosphate</name>
        <dbReference type="ChEBI" id="CHEBI:58937"/>
    </ligand>
</feature>
<feature type="binding site" evidence="1">
    <location>
        <position position="146"/>
    </location>
    <ligand>
        <name>Mg(2+)</name>
        <dbReference type="ChEBI" id="CHEBI:18420"/>
    </ligand>
</feature>
<feature type="binding site" evidence="1">
    <location>
        <begin position="147"/>
        <end position="148"/>
    </location>
    <ligand>
        <name>thiamine diphosphate</name>
        <dbReference type="ChEBI" id="CHEBI:58937"/>
    </ligand>
</feature>
<feature type="binding site" evidence="1">
    <location>
        <position position="175"/>
    </location>
    <ligand>
        <name>Mg(2+)</name>
        <dbReference type="ChEBI" id="CHEBI:18420"/>
    </ligand>
</feature>
<feature type="binding site" evidence="1">
    <location>
        <position position="175"/>
    </location>
    <ligand>
        <name>thiamine diphosphate</name>
        <dbReference type="ChEBI" id="CHEBI:58937"/>
    </ligand>
</feature>
<feature type="binding site" evidence="1">
    <location>
        <position position="282"/>
    </location>
    <ligand>
        <name>thiamine diphosphate</name>
        <dbReference type="ChEBI" id="CHEBI:58937"/>
    </ligand>
</feature>
<feature type="binding site" evidence="1">
    <location>
        <position position="363"/>
    </location>
    <ligand>
        <name>thiamine diphosphate</name>
        <dbReference type="ChEBI" id="CHEBI:58937"/>
    </ligand>
</feature>
<reference key="1">
    <citation type="submission" date="2006-03" db="EMBL/GenBank/DDBJ databases">
        <title>Complete sequence of Methylobacillus flagellatus KT.</title>
        <authorList>
            <consortium name="US DOE Joint Genome Institute"/>
            <person name="Copeland A."/>
            <person name="Lucas S."/>
            <person name="Lapidus A."/>
            <person name="Barry K."/>
            <person name="Detter J.C."/>
            <person name="Glavina del Rio T."/>
            <person name="Hammon N."/>
            <person name="Israni S."/>
            <person name="Dalin E."/>
            <person name="Tice H."/>
            <person name="Pitluck S."/>
            <person name="Brettin T."/>
            <person name="Bruce D."/>
            <person name="Han C."/>
            <person name="Tapia R."/>
            <person name="Saunders E."/>
            <person name="Gilna P."/>
            <person name="Schmutz J."/>
            <person name="Larimer F."/>
            <person name="Land M."/>
            <person name="Kyrpides N."/>
            <person name="Anderson I."/>
            <person name="Richardson P."/>
        </authorList>
    </citation>
    <scope>NUCLEOTIDE SEQUENCE [LARGE SCALE GENOMIC DNA]</scope>
    <source>
        <strain>ATCC 51484 / DSM 6875 / VKM B-1610 / KT</strain>
    </source>
</reference>
<dbReference type="EC" id="2.2.1.7" evidence="1"/>
<dbReference type="EMBL" id="CP000284">
    <property type="protein sequence ID" value="ABE50400.1"/>
    <property type="molecule type" value="Genomic_DNA"/>
</dbReference>
<dbReference type="RefSeq" id="WP_011480354.1">
    <property type="nucleotide sequence ID" value="NC_007947.1"/>
</dbReference>
<dbReference type="SMR" id="Q1GZD7"/>
<dbReference type="STRING" id="265072.Mfla_2133"/>
<dbReference type="KEGG" id="mfa:Mfla_2133"/>
<dbReference type="eggNOG" id="COG1154">
    <property type="taxonomic scope" value="Bacteria"/>
</dbReference>
<dbReference type="HOGENOM" id="CLU_009227_1_4_4"/>
<dbReference type="OrthoDB" id="9803371at2"/>
<dbReference type="UniPathway" id="UPA00064">
    <property type="reaction ID" value="UER00091"/>
</dbReference>
<dbReference type="Proteomes" id="UP000002440">
    <property type="component" value="Chromosome"/>
</dbReference>
<dbReference type="GO" id="GO:0005829">
    <property type="term" value="C:cytosol"/>
    <property type="evidence" value="ECO:0007669"/>
    <property type="project" value="TreeGrafter"/>
</dbReference>
<dbReference type="GO" id="GO:0008661">
    <property type="term" value="F:1-deoxy-D-xylulose-5-phosphate synthase activity"/>
    <property type="evidence" value="ECO:0007669"/>
    <property type="project" value="UniProtKB-UniRule"/>
</dbReference>
<dbReference type="GO" id="GO:0000287">
    <property type="term" value="F:magnesium ion binding"/>
    <property type="evidence" value="ECO:0007669"/>
    <property type="project" value="UniProtKB-UniRule"/>
</dbReference>
<dbReference type="GO" id="GO:0030976">
    <property type="term" value="F:thiamine pyrophosphate binding"/>
    <property type="evidence" value="ECO:0007669"/>
    <property type="project" value="UniProtKB-UniRule"/>
</dbReference>
<dbReference type="GO" id="GO:0052865">
    <property type="term" value="P:1-deoxy-D-xylulose 5-phosphate biosynthetic process"/>
    <property type="evidence" value="ECO:0007669"/>
    <property type="project" value="UniProtKB-UniPathway"/>
</dbReference>
<dbReference type="GO" id="GO:0019288">
    <property type="term" value="P:isopentenyl diphosphate biosynthetic process, methylerythritol 4-phosphate pathway"/>
    <property type="evidence" value="ECO:0007669"/>
    <property type="project" value="TreeGrafter"/>
</dbReference>
<dbReference type="GO" id="GO:0016114">
    <property type="term" value="P:terpenoid biosynthetic process"/>
    <property type="evidence" value="ECO:0007669"/>
    <property type="project" value="UniProtKB-UniRule"/>
</dbReference>
<dbReference type="GO" id="GO:0009228">
    <property type="term" value="P:thiamine biosynthetic process"/>
    <property type="evidence" value="ECO:0007669"/>
    <property type="project" value="UniProtKB-UniRule"/>
</dbReference>
<dbReference type="CDD" id="cd02007">
    <property type="entry name" value="TPP_DXS"/>
    <property type="match status" value="1"/>
</dbReference>
<dbReference type="CDD" id="cd07033">
    <property type="entry name" value="TPP_PYR_DXS_TK_like"/>
    <property type="match status" value="1"/>
</dbReference>
<dbReference type="FunFam" id="3.40.50.920:FF:000002">
    <property type="entry name" value="1-deoxy-D-xylulose-5-phosphate synthase"/>
    <property type="match status" value="1"/>
</dbReference>
<dbReference type="FunFam" id="3.40.50.970:FF:000005">
    <property type="entry name" value="1-deoxy-D-xylulose-5-phosphate synthase"/>
    <property type="match status" value="1"/>
</dbReference>
<dbReference type="Gene3D" id="3.40.50.920">
    <property type="match status" value="1"/>
</dbReference>
<dbReference type="Gene3D" id="3.40.50.970">
    <property type="match status" value="2"/>
</dbReference>
<dbReference type="HAMAP" id="MF_00315">
    <property type="entry name" value="DXP_synth"/>
    <property type="match status" value="1"/>
</dbReference>
<dbReference type="InterPro" id="IPR005477">
    <property type="entry name" value="Dxylulose-5-P_synthase"/>
</dbReference>
<dbReference type="InterPro" id="IPR029061">
    <property type="entry name" value="THDP-binding"/>
</dbReference>
<dbReference type="InterPro" id="IPR009014">
    <property type="entry name" value="Transketo_C/PFOR_II"/>
</dbReference>
<dbReference type="InterPro" id="IPR005475">
    <property type="entry name" value="Transketolase-like_Pyr-bd"/>
</dbReference>
<dbReference type="InterPro" id="IPR020826">
    <property type="entry name" value="Transketolase_BS"/>
</dbReference>
<dbReference type="InterPro" id="IPR033248">
    <property type="entry name" value="Transketolase_C"/>
</dbReference>
<dbReference type="InterPro" id="IPR049557">
    <property type="entry name" value="Transketolase_CS"/>
</dbReference>
<dbReference type="NCBIfam" id="TIGR00204">
    <property type="entry name" value="dxs"/>
    <property type="match status" value="1"/>
</dbReference>
<dbReference type="NCBIfam" id="NF003933">
    <property type="entry name" value="PRK05444.2-2"/>
    <property type="match status" value="1"/>
</dbReference>
<dbReference type="PANTHER" id="PTHR43322">
    <property type="entry name" value="1-D-DEOXYXYLULOSE 5-PHOSPHATE SYNTHASE-RELATED"/>
    <property type="match status" value="1"/>
</dbReference>
<dbReference type="PANTHER" id="PTHR43322:SF5">
    <property type="entry name" value="1-DEOXY-D-XYLULOSE-5-PHOSPHATE SYNTHASE, CHLOROPLASTIC"/>
    <property type="match status" value="1"/>
</dbReference>
<dbReference type="Pfam" id="PF13292">
    <property type="entry name" value="DXP_synthase_N"/>
    <property type="match status" value="1"/>
</dbReference>
<dbReference type="Pfam" id="PF02779">
    <property type="entry name" value="Transket_pyr"/>
    <property type="match status" value="1"/>
</dbReference>
<dbReference type="Pfam" id="PF02780">
    <property type="entry name" value="Transketolase_C"/>
    <property type="match status" value="1"/>
</dbReference>
<dbReference type="SMART" id="SM00861">
    <property type="entry name" value="Transket_pyr"/>
    <property type="match status" value="1"/>
</dbReference>
<dbReference type="SUPFAM" id="SSF52518">
    <property type="entry name" value="Thiamin diphosphate-binding fold (THDP-binding)"/>
    <property type="match status" value="2"/>
</dbReference>
<dbReference type="SUPFAM" id="SSF52922">
    <property type="entry name" value="TK C-terminal domain-like"/>
    <property type="match status" value="1"/>
</dbReference>
<dbReference type="PROSITE" id="PS00801">
    <property type="entry name" value="TRANSKETOLASE_1"/>
    <property type="match status" value="1"/>
</dbReference>
<dbReference type="PROSITE" id="PS00802">
    <property type="entry name" value="TRANSKETOLASE_2"/>
    <property type="match status" value="1"/>
</dbReference>
<proteinExistence type="inferred from homology"/>
<gene>
    <name evidence="1" type="primary">dxs</name>
    <name type="ordered locus">Mfla_2133</name>
</gene>
<protein>
    <recommendedName>
        <fullName evidence="1">1-deoxy-D-xylulose-5-phosphate synthase</fullName>
        <ecNumber evidence="1">2.2.1.7</ecNumber>
    </recommendedName>
    <alternativeName>
        <fullName evidence="1">1-deoxyxylulose-5-phosphate synthase</fullName>
        <shortName evidence="1">DXP synthase</shortName>
        <shortName evidence="1">DXPS</shortName>
    </alternativeName>
</protein>